<accession>O75005</accession>
<gene>
    <name type="primary">vas2</name>
    <name type="ORF">SPBC1709.02c</name>
    <name type="ORF">SPBC1734.18c</name>
</gene>
<reference key="1">
    <citation type="journal article" date="2002" name="Nature">
        <title>The genome sequence of Schizosaccharomyces pombe.</title>
        <authorList>
            <person name="Wood V."/>
            <person name="Gwilliam R."/>
            <person name="Rajandream M.A."/>
            <person name="Lyne M.H."/>
            <person name="Lyne R."/>
            <person name="Stewart A."/>
            <person name="Sgouros J.G."/>
            <person name="Peat N."/>
            <person name="Hayles J."/>
            <person name="Baker S.G."/>
            <person name="Basham D."/>
            <person name="Bowman S."/>
            <person name="Brooks K."/>
            <person name="Brown D."/>
            <person name="Brown S."/>
            <person name="Chillingworth T."/>
            <person name="Churcher C.M."/>
            <person name="Collins M."/>
            <person name="Connor R."/>
            <person name="Cronin A."/>
            <person name="Davis P."/>
            <person name="Feltwell T."/>
            <person name="Fraser A."/>
            <person name="Gentles S."/>
            <person name="Goble A."/>
            <person name="Hamlin N."/>
            <person name="Harris D.E."/>
            <person name="Hidalgo J."/>
            <person name="Hodgson G."/>
            <person name="Holroyd S."/>
            <person name="Hornsby T."/>
            <person name="Howarth S."/>
            <person name="Huckle E.J."/>
            <person name="Hunt S."/>
            <person name="Jagels K."/>
            <person name="James K.D."/>
            <person name="Jones L."/>
            <person name="Jones M."/>
            <person name="Leather S."/>
            <person name="McDonald S."/>
            <person name="McLean J."/>
            <person name="Mooney P."/>
            <person name="Moule S."/>
            <person name="Mungall K.L."/>
            <person name="Murphy L.D."/>
            <person name="Niblett D."/>
            <person name="Odell C."/>
            <person name="Oliver K."/>
            <person name="O'Neil S."/>
            <person name="Pearson D."/>
            <person name="Quail M.A."/>
            <person name="Rabbinowitsch E."/>
            <person name="Rutherford K.M."/>
            <person name="Rutter S."/>
            <person name="Saunders D."/>
            <person name="Seeger K."/>
            <person name="Sharp S."/>
            <person name="Skelton J."/>
            <person name="Simmonds M.N."/>
            <person name="Squares R."/>
            <person name="Squares S."/>
            <person name="Stevens K."/>
            <person name="Taylor K."/>
            <person name="Taylor R.G."/>
            <person name="Tivey A."/>
            <person name="Walsh S.V."/>
            <person name="Warren T."/>
            <person name="Whitehead S."/>
            <person name="Woodward J.R."/>
            <person name="Volckaert G."/>
            <person name="Aert R."/>
            <person name="Robben J."/>
            <person name="Grymonprez B."/>
            <person name="Weltjens I."/>
            <person name="Vanstreels E."/>
            <person name="Rieger M."/>
            <person name="Schaefer M."/>
            <person name="Mueller-Auer S."/>
            <person name="Gabel C."/>
            <person name="Fuchs M."/>
            <person name="Duesterhoeft A."/>
            <person name="Fritzc C."/>
            <person name="Holzer E."/>
            <person name="Moestl D."/>
            <person name="Hilbert H."/>
            <person name="Borzym K."/>
            <person name="Langer I."/>
            <person name="Beck A."/>
            <person name="Lehrach H."/>
            <person name="Reinhardt R."/>
            <person name="Pohl T.M."/>
            <person name="Eger P."/>
            <person name="Zimmermann W."/>
            <person name="Wedler H."/>
            <person name="Wambutt R."/>
            <person name="Purnelle B."/>
            <person name="Goffeau A."/>
            <person name="Cadieu E."/>
            <person name="Dreano S."/>
            <person name="Gloux S."/>
            <person name="Lelaure V."/>
            <person name="Mottier S."/>
            <person name="Galibert F."/>
            <person name="Aves S.J."/>
            <person name="Xiang Z."/>
            <person name="Hunt C."/>
            <person name="Moore K."/>
            <person name="Hurst S.M."/>
            <person name="Lucas M."/>
            <person name="Rochet M."/>
            <person name="Gaillardin C."/>
            <person name="Tallada V.A."/>
            <person name="Garzon A."/>
            <person name="Thode G."/>
            <person name="Daga R.R."/>
            <person name="Cruzado L."/>
            <person name="Jimenez J."/>
            <person name="Sanchez M."/>
            <person name="del Rey F."/>
            <person name="Benito J."/>
            <person name="Dominguez A."/>
            <person name="Revuelta J.L."/>
            <person name="Moreno S."/>
            <person name="Armstrong J."/>
            <person name="Forsburg S.L."/>
            <person name="Cerutti L."/>
            <person name="Lowe T."/>
            <person name="McCombie W.R."/>
            <person name="Paulsen I."/>
            <person name="Potashkin J."/>
            <person name="Shpakovski G.V."/>
            <person name="Ussery D."/>
            <person name="Barrell B.G."/>
            <person name="Nurse P."/>
        </authorList>
    </citation>
    <scope>NUCLEOTIDE SEQUENCE [LARGE SCALE GENOMIC DNA]</scope>
    <source>
        <strain>972 / ATCC 24843</strain>
    </source>
</reference>
<reference key="2">
    <citation type="journal article" date="2006" name="Nat. Biotechnol.">
        <title>ORFeome cloning and global analysis of protein localization in the fission yeast Schizosaccharomyces pombe.</title>
        <authorList>
            <person name="Matsuyama A."/>
            <person name="Arai R."/>
            <person name="Yashiroda Y."/>
            <person name="Shirai A."/>
            <person name="Kamata A."/>
            <person name="Sekido S."/>
            <person name="Kobayashi Y."/>
            <person name="Hashimoto A."/>
            <person name="Hamamoto M."/>
            <person name="Hiraoka Y."/>
            <person name="Horinouchi S."/>
            <person name="Yoshida M."/>
        </authorList>
    </citation>
    <scope>SUBCELLULAR LOCATION [LARGE SCALE ANALYSIS]</scope>
</reference>
<feature type="chain" id="PRO_0000035838" description="Valine--tRNA ligase">
    <location>
        <begin position="1"/>
        <end position="980"/>
    </location>
</feature>
<feature type="region of interest" description="Disordered" evidence="2">
    <location>
        <begin position="1"/>
        <end position="40"/>
    </location>
</feature>
<feature type="short sequence motif" description="'HIGH' region">
    <location>
        <begin position="139"/>
        <end position="149"/>
    </location>
</feature>
<feature type="short sequence motif" description="'KMSKS' region">
    <location>
        <begin position="652"/>
        <end position="656"/>
    </location>
</feature>
<feature type="compositionally biased region" description="Basic and acidic residues" evidence="2">
    <location>
        <begin position="22"/>
        <end position="40"/>
    </location>
</feature>
<feature type="binding site" evidence="1">
    <location>
        <position position="655"/>
    </location>
    <ligand>
        <name>ATP</name>
        <dbReference type="ChEBI" id="CHEBI:30616"/>
    </ligand>
</feature>
<name>SYV_SCHPO</name>
<keyword id="KW-0030">Aminoacyl-tRNA synthetase</keyword>
<keyword id="KW-0067">ATP-binding</keyword>
<keyword id="KW-0963">Cytoplasm</keyword>
<keyword id="KW-0436">Ligase</keyword>
<keyword id="KW-0547">Nucleotide-binding</keyword>
<keyword id="KW-0648">Protein biosynthesis</keyword>
<keyword id="KW-1185">Reference proteome</keyword>
<evidence type="ECO:0000250" key="1"/>
<evidence type="ECO:0000256" key="2">
    <source>
        <dbReference type="SAM" id="MobiDB-lite"/>
    </source>
</evidence>
<evidence type="ECO:0000269" key="3">
    <source>
    </source>
</evidence>
<evidence type="ECO:0000305" key="4"/>
<sequence length="980" mass="111317">MADKGCEAAQSKDSSAPGSGEPRPKTEKELERERQKAAKLEKYHAKLAAKKAKEEARKPKLDKKAKIASPVAEYVEKTTPGEKKVLQDLDSPALKSYNPKAVESAWYDWWVKSGFFEPEFGPDGKPKKEGVFVITSPPPNVTGALHIGHALTIAIQDSLARWNRMLGKTVLFLGGFDHAGLSTQSVVEKKLWYTQKKTRHDYPRDKFVDIVWEWKEEYHNRIKNQMSRLGGSFDWTREAFTMDENLSRAVVETFVRLHEENIIYRANRLVNWCTALQTTLSNLEVENVDVPGRTLLKVPGYDEPVEVGVLTSIAYAVEGSDERIVIATTRPETLLGDTAVAVHPQDPRYKHLHGKFVKHPFCNRSIPIICDDIIVDMEFGTGAVKITPAHDPNDYEVGKRHNLEFINIFTDDGLLNENCGEFAGMKRFTARVKVVERLKELGLFVGTKENPMVIPLCGKTSDIIEPVMKPQWWVNQKEMAAAAAEVVKSGEIEIAPDMSRREFIRWMENIQDWCISRQLWWGHRIPAYFVNLADEPSQDRSEGRYWVTGRTLEQAEEKAKAAFPGKSFTLEQDEDVLDTWFSSGLWPFSTLGWPKDTSDYENFYPTTLMETGWDILFFWIARMVMLGLKLTGKIPFKRVFCHALVRDAQGRKMSKSLGNVVDPIDVIEGISLQALHDKLLVGNLDSREVEKAKKGQRLSYPKGIPQCGTDALRFTLCSLTTGGRDLNLDILRVEGYRKFCNKLYNATKFALGRLGSNFVPNKTADLTGNESLVEKWIFHRLNIAAAAMNKNMEEMNFLQATSAVHQFWLYELCDVYIENSKYLLSDGTEVQQESAKQTLYTVLDNALRLMHPFMPYVTEEMWQRLPRRPGDKTQTIVKAAFPVERVDYSNEIAAKYYESIITVVHSTRSMMAENGIKSDAVVYIHPDEEHSKLITSESASIQSLIKKCKTLSIVDNTFDSDKCVKNEVLEGSTIFLERNN</sequence>
<dbReference type="EC" id="6.1.1.9"/>
<dbReference type="EMBL" id="CU329671">
    <property type="protein sequence ID" value="CAA21312.1"/>
    <property type="molecule type" value="Genomic_DNA"/>
</dbReference>
<dbReference type="PIR" id="T39630">
    <property type="entry name" value="T39630"/>
</dbReference>
<dbReference type="RefSeq" id="NP_595435.1">
    <property type="nucleotide sequence ID" value="NM_001021343.2"/>
</dbReference>
<dbReference type="SMR" id="O75005"/>
<dbReference type="BioGRID" id="276730">
    <property type="interactions" value="4"/>
</dbReference>
<dbReference type="FunCoup" id="O75005">
    <property type="interactions" value="913"/>
</dbReference>
<dbReference type="STRING" id="284812.O75005"/>
<dbReference type="iPTMnet" id="O75005"/>
<dbReference type="PaxDb" id="4896-SPBC1709.02c.1"/>
<dbReference type="EnsemblFungi" id="SPBC1709.02c.1">
    <property type="protein sequence ID" value="SPBC1709.02c.1:pep"/>
    <property type="gene ID" value="SPBC1709.02c"/>
</dbReference>
<dbReference type="GeneID" id="2540197"/>
<dbReference type="KEGG" id="spo:2540197"/>
<dbReference type="PomBase" id="SPBC1709.02c"/>
<dbReference type="VEuPathDB" id="FungiDB:SPBC1709.02c"/>
<dbReference type="eggNOG" id="KOG0432">
    <property type="taxonomic scope" value="Eukaryota"/>
</dbReference>
<dbReference type="HOGENOM" id="CLU_001493_0_1_1"/>
<dbReference type="InParanoid" id="O75005"/>
<dbReference type="OMA" id="LDTWMDS"/>
<dbReference type="PhylomeDB" id="O75005"/>
<dbReference type="BRENDA" id="6.1.1.9">
    <property type="organism ID" value="5613"/>
</dbReference>
<dbReference type="PRO" id="PR:O75005"/>
<dbReference type="Proteomes" id="UP000002485">
    <property type="component" value="Chromosome II"/>
</dbReference>
<dbReference type="GO" id="GO:0005737">
    <property type="term" value="C:cytoplasm"/>
    <property type="evidence" value="ECO:0000316"/>
    <property type="project" value="PomBase"/>
</dbReference>
<dbReference type="GO" id="GO:0005829">
    <property type="term" value="C:cytosol"/>
    <property type="evidence" value="ECO:0007005"/>
    <property type="project" value="PomBase"/>
</dbReference>
<dbReference type="GO" id="GO:0002161">
    <property type="term" value="F:aminoacyl-tRNA deacylase activity"/>
    <property type="evidence" value="ECO:0007669"/>
    <property type="project" value="InterPro"/>
</dbReference>
<dbReference type="GO" id="GO:0005524">
    <property type="term" value="F:ATP binding"/>
    <property type="evidence" value="ECO:0000255"/>
    <property type="project" value="PomBase"/>
</dbReference>
<dbReference type="GO" id="GO:0004832">
    <property type="term" value="F:valine-tRNA ligase activity"/>
    <property type="evidence" value="ECO:0000314"/>
    <property type="project" value="PomBase"/>
</dbReference>
<dbReference type="GO" id="GO:0002181">
    <property type="term" value="P:cytoplasmic translation"/>
    <property type="evidence" value="ECO:0000303"/>
    <property type="project" value="PomBase"/>
</dbReference>
<dbReference type="GO" id="GO:0061475">
    <property type="term" value="P:cytosolic valyl-tRNA aminoacylation"/>
    <property type="evidence" value="ECO:0000269"/>
    <property type="project" value="PomBase"/>
</dbReference>
<dbReference type="GO" id="GO:0006438">
    <property type="term" value="P:valyl-tRNA aminoacylation"/>
    <property type="evidence" value="ECO:0000318"/>
    <property type="project" value="GO_Central"/>
</dbReference>
<dbReference type="CDD" id="cd07962">
    <property type="entry name" value="Anticodon_Ia_Val"/>
    <property type="match status" value="1"/>
</dbReference>
<dbReference type="CDD" id="cd00817">
    <property type="entry name" value="ValRS_core"/>
    <property type="match status" value="1"/>
</dbReference>
<dbReference type="FunFam" id="1.10.730.10:FF:000009">
    <property type="entry name" value="Valine--tRNA ligase, mitochondrial"/>
    <property type="match status" value="1"/>
</dbReference>
<dbReference type="FunFam" id="3.40.50.620:FF:000020">
    <property type="entry name" value="Valine--tRNA ligase, mitochondrial"/>
    <property type="match status" value="1"/>
</dbReference>
<dbReference type="FunFam" id="3.40.50.620:FF:000120">
    <property type="entry name" value="Valine--tRNA ligase, mitochondrial"/>
    <property type="match status" value="1"/>
</dbReference>
<dbReference type="FunFam" id="3.90.740.10:FF:000005">
    <property type="entry name" value="Valine--tRNA ligase, mitochondrial"/>
    <property type="match status" value="1"/>
</dbReference>
<dbReference type="Gene3D" id="3.40.50.620">
    <property type="entry name" value="HUPs"/>
    <property type="match status" value="2"/>
</dbReference>
<dbReference type="Gene3D" id="1.10.730.10">
    <property type="entry name" value="Isoleucyl-tRNA Synthetase, Domain 1"/>
    <property type="match status" value="1"/>
</dbReference>
<dbReference type="Gene3D" id="3.90.740.10">
    <property type="entry name" value="Valyl/Leucyl/Isoleucyl-tRNA synthetase, editing domain"/>
    <property type="match status" value="1"/>
</dbReference>
<dbReference type="HAMAP" id="MF_02004">
    <property type="entry name" value="Val_tRNA_synth_type1"/>
    <property type="match status" value="1"/>
</dbReference>
<dbReference type="InterPro" id="IPR001412">
    <property type="entry name" value="aa-tRNA-synth_I_CS"/>
</dbReference>
<dbReference type="InterPro" id="IPR002300">
    <property type="entry name" value="aa-tRNA-synth_Ia"/>
</dbReference>
<dbReference type="InterPro" id="IPR033705">
    <property type="entry name" value="Anticodon_Ia_Val"/>
</dbReference>
<dbReference type="InterPro" id="IPR013155">
    <property type="entry name" value="M/V/L/I-tRNA-synth_anticd-bd"/>
</dbReference>
<dbReference type="InterPro" id="IPR014729">
    <property type="entry name" value="Rossmann-like_a/b/a_fold"/>
</dbReference>
<dbReference type="InterPro" id="IPR009080">
    <property type="entry name" value="tRNAsynth_Ia_anticodon-bd"/>
</dbReference>
<dbReference type="InterPro" id="IPR009008">
    <property type="entry name" value="Val/Leu/Ile-tRNA-synth_edit"/>
</dbReference>
<dbReference type="InterPro" id="IPR002303">
    <property type="entry name" value="Valyl-tRNA_ligase"/>
</dbReference>
<dbReference type="NCBIfam" id="NF004349">
    <property type="entry name" value="PRK05729.1"/>
    <property type="match status" value="1"/>
</dbReference>
<dbReference type="NCBIfam" id="TIGR00422">
    <property type="entry name" value="valS"/>
    <property type="match status" value="1"/>
</dbReference>
<dbReference type="PANTHER" id="PTHR11946:SF109">
    <property type="entry name" value="VALINE--TRNA LIGASE"/>
    <property type="match status" value="1"/>
</dbReference>
<dbReference type="PANTHER" id="PTHR11946">
    <property type="entry name" value="VALYL-TRNA SYNTHETASES"/>
    <property type="match status" value="1"/>
</dbReference>
<dbReference type="Pfam" id="PF08264">
    <property type="entry name" value="Anticodon_1"/>
    <property type="match status" value="1"/>
</dbReference>
<dbReference type="Pfam" id="PF00133">
    <property type="entry name" value="tRNA-synt_1"/>
    <property type="match status" value="1"/>
</dbReference>
<dbReference type="PRINTS" id="PR00986">
    <property type="entry name" value="TRNASYNTHVAL"/>
</dbReference>
<dbReference type="SUPFAM" id="SSF47323">
    <property type="entry name" value="Anticodon-binding domain of a subclass of class I aminoacyl-tRNA synthetases"/>
    <property type="match status" value="1"/>
</dbReference>
<dbReference type="SUPFAM" id="SSF52374">
    <property type="entry name" value="Nucleotidylyl transferase"/>
    <property type="match status" value="1"/>
</dbReference>
<dbReference type="SUPFAM" id="SSF50677">
    <property type="entry name" value="ValRS/IleRS/LeuRS editing domain"/>
    <property type="match status" value="1"/>
</dbReference>
<dbReference type="PROSITE" id="PS00178">
    <property type="entry name" value="AA_TRNA_LIGASE_I"/>
    <property type="match status" value="1"/>
</dbReference>
<comment type="catalytic activity">
    <reaction>
        <text>tRNA(Val) + L-valine + ATP = L-valyl-tRNA(Val) + AMP + diphosphate</text>
        <dbReference type="Rhea" id="RHEA:10704"/>
        <dbReference type="Rhea" id="RHEA-COMP:9672"/>
        <dbReference type="Rhea" id="RHEA-COMP:9708"/>
        <dbReference type="ChEBI" id="CHEBI:30616"/>
        <dbReference type="ChEBI" id="CHEBI:33019"/>
        <dbReference type="ChEBI" id="CHEBI:57762"/>
        <dbReference type="ChEBI" id="CHEBI:78442"/>
        <dbReference type="ChEBI" id="CHEBI:78537"/>
        <dbReference type="ChEBI" id="CHEBI:456215"/>
        <dbReference type="EC" id="6.1.1.9"/>
    </reaction>
</comment>
<comment type="subcellular location">
    <subcellularLocation>
        <location evidence="3">Cytoplasm</location>
    </subcellularLocation>
</comment>
<comment type="similarity">
    <text evidence="4">Belongs to the class-I aminoacyl-tRNA synthetase family.</text>
</comment>
<organism>
    <name type="scientific">Schizosaccharomyces pombe (strain 972 / ATCC 24843)</name>
    <name type="common">Fission yeast</name>
    <dbReference type="NCBI Taxonomy" id="284812"/>
    <lineage>
        <taxon>Eukaryota</taxon>
        <taxon>Fungi</taxon>
        <taxon>Dikarya</taxon>
        <taxon>Ascomycota</taxon>
        <taxon>Taphrinomycotina</taxon>
        <taxon>Schizosaccharomycetes</taxon>
        <taxon>Schizosaccharomycetales</taxon>
        <taxon>Schizosaccharomycetaceae</taxon>
        <taxon>Schizosaccharomyces</taxon>
    </lineage>
</organism>
<protein>
    <recommendedName>
        <fullName>Valine--tRNA ligase</fullName>
        <ecNumber>6.1.1.9</ecNumber>
    </recommendedName>
    <alternativeName>
        <fullName>Valyl-tRNA synthetase</fullName>
        <shortName>ValRS</shortName>
    </alternativeName>
</protein>
<proteinExistence type="inferred from homology"/>